<dbReference type="EC" id="3.2.1.2"/>
<dbReference type="EMBL" id="AF061204">
    <property type="protein sequence ID" value="AAC67246.1"/>
    <property type="molecule type" value="Genomic_DNA"/>
</dbReference>
<dbReference type="SMR" id="P82993"/>
<dbReference type="Allergome" id="420">
    <property type="allergen name" value="Hor v 17"/>
</dbReference>
<dbReference type="CAZy" id="GH14">
    <property type="family name" value="Glycoside Hydrolase Family 14"/>
</dbReference>
<dbReference type="GO" id="GO:0016161">
    <property type="term" value="F:beta-amylase activity"/>
    <property type="evidence" value="ECO:0007669"/>
    <property type="project" value="UniProtKB-EC"/>
</dbReference>
<dbReference type="GO" id="GO:0000272">
    <property type="term" value="P:polysaccharide catabolic process"/>
    <property type="evidence" value="ECO:0007669"/>
    <property type="project" value="UniProtKB-KW"/>
</dbReference>
<dbReference type="FunFam" id="3.20.20.80:FF:000066">
    <property type="entry name" value="Beta-amylase"/>
    <property type="match status" value="1"/>
</dbReference>
<dbReference type="Gene3D" id="3.20.20.80">
    <property type="entry name" value="Glycosidases"/>
    <property type="match status" value="1"/>
</dbReference>
<dbReference type="InterPro" id="IPR001554">
    <property type="entry name" value="Glyco_hydro_14"/>
</dbReference>
<dbReference type="InterPro" id="IPR018238">
    <property type="entry name" value="Glyco_hydro_14_CS"/>
</dbReference>
<dbReference type="InterPro" id="IPR001371">
    <property type="entry name" value="Glyco_hydro_14B_pln"/>
</dbReference>
<dbReference type="InterPro" id="IPR017853">
    <property type="entry name" value="Glycoside_hydrolase_SF"/>
</dbReference>
<dbReference type="PANTHER" id="PTHR31352:SF39">
    <property type="entry name" value="BETA-AMYLASE"/>
    <property type="match status" value="1"/>
</dbReference>
<dbReference type="PANTHER" id="PTHR31352">
    <property type="entry name" value="BETA-AMYLASE 1, CHLOROPLASTIC"/>
    <property type="match status" value="1"/>
</dbReference>
<dbReference type="Pfam" id="PF01373">
    <property type="entry name" value="Glyco_hydro_14"/>
    <property type="match status" value="1"/>
</dbReference>
<dbReference type="PRINTS" id="PR00750">
    <property type="entry name" value="BETAAMYLASE"/>
</dbReference>
<dbReference type="PRINTS" id="PR00842">
    <property type="entry name" value="GLHYDLASE14B"/>
</dbReference>
<dbReference type="SUPFAM" id="SSF51445">
    <property type="entry name" value="(Trans)glycosidases"/>
    <property type="match status" value="1"/>
</dbReference>
<dbReference type="PROSITE" id="PS00506">
    <property type="entry name" value="BETA_AMYLASE_1"/>
    <property type="match status" value="1"/>
</dbReference>
<dbReference type="PROSITE" id="PS00679">
    <property type="entry name" value="BETA_AMYLASE_2"/>
    <property type="match status" value="1"/>
</dbReference>
<sequence>MEVNVKGNYVQVYVMLPLDAVSVNNRFEKGDELRAQLRKLVEAGVDGVMVDVWWGLVEGKGPKAYDWSAYKQLFELVQKAGLKLQAIMSFHQCGGNVGDAVNIPIPQWVRDVGTRDPDIFYTDGHGTRNIEYLTLGVDNQPLFHGRSAVQMYADYMTSFRENMKEFLDAGVIVDIEVGLGPAGEMRYPSYPQSHGWSFPGIGEFICYDKYLQADFKAAAAAVGHPEWEFPNDAGQYNDTPERTQFFRDNGTYLTEKGRFFLAWYSNNLIKHGDRILDEANKVFLGYKVQLAIKISGIHWWYKVPSHAAELTAGYYNLHDRDGYRTIARMLKRHRASINFTCAEMRDSEQSSQAMSAPEELVQQVLSAGWREGLNVACENALPRYDPTAYNTILRNARPHGINQSGPPEHKLFGFTYLRLSNQLVEGQNYVNFKTFVDRMHANLPRDPYVDPMAPLPRSGPEISIEMILQAAKPKLQPFPFQEHTDLPVGPTGGMGGQAEGPTCGMGGQVKGPTGGMGGQAEDPTSGMGGELPATM</sequence>
<feature type="propeptide" id="PRO_0000279693" description="Removed in mature form" evidence="6">
    <location>
        <begin position="1"/>
        <end position="2"/>
    </location>
</feature>
<feature type="chain" id="PRO_0000279694" description="Beta-amylase" evidence="6">
    <location>
        <begin position="3"/>
        <end position="489"/>
    </location>
</feature>
<feature type="propeptide" id="PRO_0000279695" description="Removed in mature form" evidence="6">
    <location>
        <begin position="490"/>
        <end position="535"/>
    </location>
</feature>
<feature type="repeat" description="1" evidence="2">
    <location>
        <begin position="489"/>
        <end position="499"/>
    </location>
</feature>
<feature type="repeat" description="2" evidence="2">
    <location>
        <begin position="500"/>
        <end position="510"/>
    </location>
</feature>
<feature type="repeat" description="3" evidence="2">
    <location>
        <begin position="511"/>
        <end position="521"/>
    </location>
</feature>
<feature type="repeat" description="4; approximate" evidence="2">
    <location>
        <begin position="522"/>
        <end position="532"/>
    </location>
</feature>
<feature type="region of interest" description="4 X 11 AA tandem repeats" evidence="2">
    <location>
        <begin position="489"/>
        <end position="532"/>
    </location>
</feature>
<feature type="region of interest" description="Disordered" evidence="4">
    <location>
        <begin position="513"/>
        <end position="535"/>
    </location>
</feature>
<feature type="active site" description="Proton donor" evidence="3">
    <location>
        <position position="184"/>
    </location>
</feature>
<feature type="active site" description="Proton acceptor" evidence="1">
    <location>
        <position position="378"/>
    </location>
</feature>
<feature type="binding site" evidence="1">
    <location>
        <position position="51"/>
    </location>
    <ligand>
        <name>substrate</name>
    </ligand>
</feature>
<feature type="binding site" evidence="1">
    <location>
        <position position="91"/>
    </location>
    <ligand>
        <name>substrate</name>
    </ligand>
</feature>
<feature type="binding site" evidence="1">
    <location>
        <position position="99"/>
    </location>
    <ligand>
        <name>substrate</name>
    </ligand>
</feature>
<feature type="binding site" evidence="1">
    <location>
        <position position="293"/>
    </location>
    <ligand>
        <name>substrate</name>
    </ligand>
</feature>
<feature type="binding site" evidence="1">
    <location>
        <position position="298"/>
    </location>
    <ligand>
        <name>substrate</name>
    </ligand>
</feature>
<feature type="binding site" evidence="1">
    <location>
        <position position="340"/>
    </location>
    <ligand>
        <name>substrate</name>
    </ligand>
</feature>
<feature type="binding site" evidence="1">
    <location>
        <begin position="379"/>
        <end position="380"/>
    </location>
    <ligand>
        <name>substrate</name>
    </ligand>
</feature>
<feature type="binding site" evidence="1">
    <location>
        <position position="418"/>
    </location>
    <ligand>
        <name>substrate</name>
    </ligand>
</feature>
<feature type="modified residue" description="N-acetylvaline" evidence="6">
    <location>
        <position position="3"/>
    </location>
</feature>
<feature type="sequence variant" evidence="6">
    <original>E</original>
    <variation>D</variation>
    <location>
        <position position="165"/>
    </location>
</feature>
<feature type="sequence variant" evidence="6">
    <original>T</original>
    <variation>S</variation>
    <location>
        <position position="254"/>
    </location>
</feature>
<feature type="sequence variant" evidence="6">
    <original>K</original>
    <variation>Q</variation>
    <location>
        <position position="472"/>
    </location>
</feature>
<protein>
    <recommendedName>
        <fullName>Beta-amylase</fullName>
        <ecNumber>3.2.1.2</ecNumber>
    </recommendedName>
    <alternativeName>
        <fullName>1,4-alpha-D-glucan maltohydrolase</fullName>
    </alternativeName>
    <alternativeName>
        <fullName>Beta-Amy1</fullName>
    </alternativeName>
</protein>
<gene>
    <name evidence="1" type="primary">BMY1</name>
</gene>
<evidence type="ECO:0000250" key="1">
    <source>
        <dbReference type="UniProtKB" id="P10538"/>
    </source>
</evidence>
<evidence type="ECO:0000255" key="2"/>
<evidence type="ECO:0000255" key="3">
    <source>
        <dbReference type="PROSITE-ProRule" id="PRU10050"/>
    </source>
</evidence>
<evidence type="ECO:0000256" key="4">
    <source>
        <dbReference type="SAM" id="MobiDB-lite"/>
    </source>
</evidence>
<evidence type="ECO:0000269" key="5">
    <source>
    </source>
</evidence>
<evidence type="ECO:0000269" key="6">
    <source ref="2"/>
</evidence>
<evidence type="ECO:0000305" key="7"/>
<name>AMYB_HORVS</name>
<accession>P82993</accession>
<proteinExistence type="evidence at protein level"/>
<organism>
    <name type="scientific">Hordeum vulgare subsp. spontaneum</name>
    <name type="common">Wild barley</name>
    <name type="synonym">Hordeum spontaneum</name>
    <dbReference type="NCBI Taxonomy" id="77009"/>
    <lineage>
        <taxon>Eukaryota</taxon>
        <taxon>Viridiplantae</taxon>
        <taxon>Streptophyta</taxon>
        <taxon>Embryophyta</taxon>
        <taxon>Tracheophyta</taxon>
        <taxon>Spermatophyta</taxon>
        <taxon>Magnoliopsida</taxon>
        <taxon>Liliopsida</taxon>
        <taxon>Poales</taxon>
        <taxon>Poaceae</taxon>
        <taxon>BOP clade</taxon>
        <taxon>Pooideae</taxon>
        <taxon>Triticodae</taxon>
        <taxon>Triticeae</taxon>
        <taxon>Hordeinae</taxon>
        <taxon>Hordeum</taxon>
    </lineage>
</organism>
<reference evidence="7" key="1">
    <citation type="journal article" date="1998" name="Plant Physiol.">
        <title>Allele-dependent barley grain beta-amylase activity.</title>
        <authorList>
            <person name="Erkkila M.J."/>
            <person name="Leah R."/>
            <person name="Ahokas H."/>
            <person name="Cameron-Mills V."/>
        </authorList>
    </citation>
    <scope>NUCLEOTIDE SEQUENCE [GENOMIC DNA]</scope>
    <scope>FUNCTION</scope>
    <source>
        <strain evidence="5">cv. NPGS PI296897</strain>
        <tissue evidence="5">Endosperm</tissue>
    </source>
</reference>
<reference evidence="7" key="2">
    <citation type="submission" date="2001-05" db="UniProtKB">
        <title>The structural basis for functional differences between allelic forms of barley (Hordeum vulgare) beta-amylase.</title>
        <authorList>
            <person name="Eglinton J.K."/>
            <person name="Lahnstein J."/>
            <person name="Shirley N."/>
            <person name="Evans D.E."/>
        </authorList>
    </citation>
    <scope>PARTIAL PROTEIN SEQUENCE</scope>
    <scope>FUNCTION</scope>
    <scope>TISSUE SPECIFICITY</scope>
    <scope>POLYMORPHISM</scope>
    <scope>ACETYLATION AT VAL-3</scope>
    <scope>VARIANTS ASP-165; SER-254 AND GLN-472</scope>
    <source>
        <strain evidence="6">cv. CPI77146-33</strain>
        <tissue evidence="6">Seed</tissue>
    </source>
</reference>
<comment type="function">
    <text evidence="5 6">Catalyzes the liberation of maltose from 1,4-alpha-D glucans.</text>
</comment>
<comment type="catalytic activity">
    <reaction>
        <text>Hydrolysis of (1-&gt;4)-alpha-D-glucosidic linkages in polysaccharides so as to remove successive maltose units from the non-reducing ends of the chains.</text>
        <dbReference type="EC" id="3.2.1.2"/>
    </reaction>
</comment>
<comment type="subunit">
    <text evidence="1">Monomer.</text>
</comment>
<comment type="tissue specificity">
    <text evidence="6">Endosperm.</text>
</comment>
<comment type="polymorphism">
    <text evidence="6">There are at least three alleles; SD2H; SD1 and SD2L. The sequence of SD2H is shown here.</text>
</comment>
<comment type="miscellaneous">
    <text evidence="6">The three alleles show different thermostabilities and different affinities for soluble starch.</text>
</comment>
<comment type="similarity">
    <text evidence="2">Belongs to the glycosyl hydrolase 14 family.</text>
</comment>
<keyword id="KW-0007">Acetylation</keyword>
<keyword id="KW-0119">Carbohydrate metabolism</keyword>
<keyword id="KW-0903">Direct protein sequencing</keyword>
<keyword id="KW-0326">Glycosidase</keyword>
<keyword id="KW-0378">Hydrolase</keyword>
<keyword id="KW-0624">Polysaccharide degradation</keyword>
<keyword id="KW-0677">Repeat</keyword>